<dbReference type="EC" id="7.2.2.10"/>
<dbReference type="EMBL" id="U75447">
    <property type="protein sequence ID" value="AAC03419.1"/>
    <property type="molecule type" value="Genomic_DNA"/>
</dbReference>
<dbReference type="EMBL" id="CR382131">
    <property type="protein sequence ID" value="CAG79326.1"/>
    <property type="molecule type" value="Genomic_DNA"/>
</dbReference>
<dbReference type="RefSeq" id="XP_503736.1">
    <property type="nucleotide sequence ID" value="XM_503736.1"/>
</dbReference>
<dbReference type="SMR" id="O43108"/>
<dbReference type="FunCoup" id="O43108">
    <property type="interactions" value="448"/>
</dbReference>
<dbReference type="STRING" id="284591.O43108"/>
<dbReference type="EnsemblFungi" id="CAG79326">
    <property type="protein sequence ID" value="CAG79326"/>
    <property type="gene ID" value="YALI0_E09471g"/>
</dbReference>
<dbReference type="KEGG" id="yli:2911589"/>
<dbReference type="VEuPathDB" id="FungiDB:YALI0_E09471g"/>
<dbReference type="HOGENOM" id="CLU_002360_3_1_1"/>
<dbReference type="InParanoid" id="O43108"/>
<dbReference type="OMA" id="KMHACET"/>
<dbReference type="OrthoDB" id="88579at4891"/>
<dbReference type="Proteomes" id="UP000001300">
    <property type="component" value="Chromosome E"/>
</dbReference>
<dbReference type="GO" id="GO:0005783">
    <property type="term" value="C:endoplasmic reticulum"/>
    <property type="evidence" value="ECO:0000318"/>
    <property type="project" value="GO_Central"/>
</dbReference>
<dbReference type="GO" id="GO:0005789">
    <property type="term" value="C:endoplasmic reticulum membrane"/>
    <property type="evidence" value="ECO:0007669"/>
    <property type="project" value="EnsemblFungi"/>
</dbReference>
<dbReference type="GO" id="GO:0000139">
    <property type="term" value="C:Golgi membrane"/>
    <property type="evidence" value="ECO:0000318"/>
    <property type="project" value="GO_Central"/>
</dbReference>
<dbReference type="GO" id="GO:0005635">
    <property type="term" value="C:nuclear envelope"/>
    <property type="evidence" value="ECO:0007669"/>
    <property type="project" value="EnsemblFungi"/>
</dbReference>
<dbReference type="GO" id="GO:0005886">
    <property type="term" value="C:plasma membrane"/>
    <property type="evidence" value="ECO:0000318"/>
    <property type="project" value="GO_Central"/>
</dbReference>
<dbReference type="GO" id="GO:0005524">
    <property type="term" value="F:ATP binding"/>
    <property type="evidence" value="ECO:0007669"/>
    <property type="project" value="UniProtKB-KW"/>
</dbReference>
<dbReference type="GO" id="GO:0016887">
    <property type="term" value="F:ATP hydrolysis activity"/>
    <property type="evidence" value="ECO:0007669"/>
    <property type="project" value="InterPro"/>
</dbReference>
<dbReference type="GO" id="GO:0005509">
    <property type="term" value="F:calcium ion binding"/>
    <property type="evidence" value="ECO:0007669"/>
    <property type="project" value="EnsemblFungi"/>
</dbReference>
<dbReference type="GO" id="GO:0005388">
    <property type="term" value="F:P-type calcium transporter activity"/>
    <property type="evidence" value="ECO:0000318"/>
    <property type="project" value="GO_Central"/>
</dbReference>
<dbReference type="GO" id="GO:0140613">
    <property type="term" value="F:P-type manganese transporter activity"/>
    <property type="evidence" value="ECO:0007669"/>
    <property type="project" value="EnsemblFungi"/>
</dbReference>
<dbReference type="GO" id="GO:0070588">
    <property type="term" value="P:calcium ion transmembrane transport"/>
    <property type="evidence" value="ECO:0000318"/>
    <property type="project" value="GO_Central"/>
</dbReference>
<dbReference type="GO" id="GO:0006874">
    <property type="term" value="P:intracellular calcium ion homeostasis"/>
    <property type="evidence" value="ECO:0000318"/>
    <property type="project" value="GO_Central"/>
</dbReference>
<dbReference type="GO" id="GO:0030026">
    <property type="term" value="P:intracellular manganese ion homeostasis"/>
    <property type="evidence" value="ECO:0007669"/>
    <property type="project" value="EnsemblFungi"/>
</dbReference>
<dbReference type="GO" id="GO:0016236">
    <property type="term" value="P:macroautophagy"/>
    <property type="evidence" value="ECO:0007669"/>
    <property type="project" value="EnsemblFungi"/>
</dbReference>
<dbReference type="GO" id="GO:0006828">
    <property type="term" value="P:manganese ion transport"/>
    <property type="evidence" value="ECO:0000318"/>
    <property type="project" value="GO_Central"/>
</dbReference>
<dbReference type="FunFam" id="2.70.150.10:FF:000008">
    <property type="entry name" value="Calcium-transporting ATPase"/>
    <property type="match status" value="1"/>
</dbReference>
<dbReference type="FunFam" id="3.40.1110.10:FF:000186">
    <property type="entry name" value="Calcium-transporting ATPase 1"/>
    <property type="match status" value="1"/>
</dbReference>
<dbReference type="FunFam" id="3.40.50.1000:FF:000028">
    <property type="entry name" value="Calcium-transporting P-type ATPase, putative"/>
    <property type="match status" value="1"/>
</dbReference>
<dbReference type="FunFam" id="3.40.50.1000:FF:000001">
    <property type="entry name" value="Phospholipid-transporting ATPase IC"/>
    <property type="match status" value="1"/>
</dbReference>
<dbReference type="Gene3D" id="3.40.1110.10">
    <property type="entry name" value="Calcium-transporting ATPase, cytoplasmic domain N"/>
    <property type="match status" value="1"/>
</dbReference>
<dbReference type="Gene3D" id="2.70.150.10">
    <property type="entry name" value="Calcium-transporting ATPase, cytoplasmic transduction domain A"/>
    <property type="match status" value="1"/>
</dbReference>
<dbReference type="Gene3D" id="1.20.1110.10">
    <property type="entry name" value="Calcium-transporting ATPase, transmembrane domain"/>
    <property type="match status" value="1"/>
</dbReference>
<dbReference type="Gene3D" id="3.40.50.1000">
    <property type="entry name" value="HAD superfamily/HAD-like"/>
    <property type="match status" value="1"/>
</dbReference>
<dbReference type="InterPro" id="IPR006068">
    <property type="entry name" value="ATPase_P-typ_cation-transptr_C"/>
</dbReference>
<dbReference type="InterPro" id="IPR004014">
    <property type="entry name" value="ATPase_P-typ_cation-transptr_N"/>
</dbReference>
<dbReference type="InterPro" id="IPR023299">
    <property type="entry name" value="ATPase_P-typ_cyto_dom_N"/>
</dbReference>
<dbReference type="InterPro" id="IPR018303">
    <property type="entry name" value="ATPase_P-typ_P_site"/>
</dbReference>
<dbReference type="InterPro" id="IPR023298">
    <property type="entry name" value="ATPase_P-typ_TM_dom_sf"/>
</dbReference>
<dbReference type="InterPro" id="IPR008250">
    <property type="entry name" value="ATPase_P-typ_transduc_dom_A_sf"/>
</dbReference>
<dbReference type="InterPro" id="IPR036412">
    <property type="entry name" value="HAD-like_sf"/>
</dbReference>
<dbReference type="InterPro" id="IPR023214">
    <property type="entry name" value="HAD_sf"/>
</dbReference>
<dbReference type="InterPro" id="IPR006413">
    <property type="entry name" value="P-type_ATPase_IIA_PMR1"/>
</dbReference>
<dbReference type="InterPro" id="IPR001757">
    <property type="entry name" value="P_typ_ATPase"/>
</dbReference>
<dbReference type="InterPro" id="IPR044492">
    <property type="entry name" value="P_typ_ATPase_HD_dom"/>
</dbReference>
<dbReference type="NCBIfam" id="TIGR01522">
    <property type="entry name" value="ATPase-IIA2_Ca"/>
    <property type="match status" value="1"/>
</dbReference>
<dbReference type="NCBIfam" id="TIGR01494">
    <property type="entry name" value="ATPase_P-type"/>
    <property type="match status" value="3"/>
</dbReference>
<dbReference type="PANTHER" id="PTHR42861">
    <property type="entry name" value="CALCIUM-TRANSPORTING ATPASE"/>
    <property type="match status" value="1"/>
</dbReference>
<dbReference type="Pfam" id="PF13246">
    <property type="entry name" value="Cation_ATPase"/>
    <property type="match status" value="1"/>
</dbReference>
<dbReference type="Pfam" id="PF00689">
    <property type="entry name" value="Cation_ATPase_C"/>
    <property type="match status" value="1"/>
</dbReference>
<dbReference type="Pfam" id="PF00690">
    <property type="entry name" value="Cation_ATPase_N"/>
    <property type="match status" value="1"/>
</dbReference>
<dbReference type="Pfam" id="PF00122">
    <property type="entry name" value="E1-E2_ATPase"/>
    <property type="match status" value="1"/>
</dbReference>
<dbReference type="Pfam" id="PF00702">
    <property type="entry name" value="Hydrolase"/>
    <property type="match status" value="1"/>
</dbReference>
<dbReference type="PRINTS" id="PR00119">
    <property type="entry name" value="CATATPASE"/>
</dbReference>
<dbReference type="PRINTS" id="PR00120">
    <property type="entry name" value="HATPASE"/>
</dbReference>
<dbReference type="SFLD" id="SFLDS00003">
    <property type="entry name" value="Haloacid_Dehalogenase"/>
    <property type="match status" value="1"/>
</dbReference>
<dbReference type="SFLD" id="SFLDF00027">
    <property type="entry name" value="p-type_atpase"/>
    <property type="match status" value="1"/>
</dbReference>
<dbReference type="SMART" id="SM00831">
    <property type="entry name" value="Cation_ATPase_N"/>
    <property type="match status" value="1"/>
</dbReference>
<dbReference type="SUPFAM" id="SSF81653">
    <property type="entry name" value="Calcium ATPase, transduction domain A"/>
    <property type="match status" value="1"/>
</dbReference>
<dbReference type="SUPFAM" id="SSF81665">
    <property type="entry name" value="Calcium ATPase, transmembrane domain M"/>
    <property type="match status" value="1"/>
</dbReference>
<dbReference type="SUPFAM" id="SSF56784">
    <property type="entry name" value="HAD-like"/>
    <property type="match status" value="1"/>
</dbReference>
<dbReference type="SUPFAM" id="SSF81660">
    <property type="entry name" value="Metal cation-transporting ATPase, ATP-binding domain N"/>
    <property type="match status" value="1"/>
</dbReference>
<dbReference type="PROSITE" id="PS00154">
    <property type="entry name" value="ATPASE_E1_E2"/>
    <property type="match status" value="1"/>
</dbReference>
<organism>
    <name type="scientific">Yarrowia lipolytica (strain CLIB 122 / E 150)</name>
    <name type="common">Yeast</name>
    <name type="synonym">Candida lipolytica</name>
    <dbReference type="NCBI Taxonomy" id="284591"/>
    <lineage>
        <taxon>Eukaryota</taxon>
        <taxon>Fungi</taxon>
        <taxon>Dikarya</taxon>
        <taxon>Ascomycota</taxon>
        <taxon>Saccharomycotina</taxon>
        <taxon>Dipodascomycetes</taxon>
        <taxon>Dipodascales</taxon>
        <taxon>Dipodascales incertae sedis</taxon>
        <taxon>Yarrowia</taxon>
    </lineage>
</organism>
<feature type="chain" id="PRO_0000046230" description="Calcium-transporting ATPase 1">
    <location>
        <begin position="1"/>
        <end position="928"/>
    </location>
</feature>
<feature type="transmembrane region" description="Helical" evidence="2">
    <location>
        <begin position="81"/>
        <end position="101"/>
    </location>
</feature>
<feature type="transmembrane region" description="Helical" evidence="2">
    <location>
        <begin position="105"/>
        <end position="125"/>
    </location>
</feature>
<feature type="transmembrane region" description="Helical" evidence="2">
    <location>
        <begin position="271"/>
        <end position="291"/>
    </location>
</feature>
<feature type="transmembrane region" description="Helical" evidence="2">
    <location>
        <begin position="306"/>
        <end position="326"/>
    </location>
</feature>
<feature type="transmembrane region" description="Helical" evidence="2">
    <location>
        <begin position="718"/>
        <end position="738"/>
    </location>
</feature>
<feature type="transmembrane region" description="Helical" evidence="2">
    <location>
        <begin position="750"/>
        <end position="770"/>
    </location>
</feature>
<feature type="transmembrane region" description="Helical" evidence="2">
    <location>
        <begin position="799"/>
        <end position="819"/>
    </location>
</feature>
<feature type="transmembrane region" description="Helical" evidence="2">
    <location>
        <begin position="860"/>
        <end position="880"/>
    </location>
</feature>
<feature type="transmembrane region" description="Helical" evidence="2">
    <location>
        <begin position="887"/>
        <end position="907"/>
    </location>
</feature>
<feature type="region of interest" description="Disordered" evidence="3">
    <location>
        <begin position="1"/>
        <end position="25"/>
    </location>
</feature>
<feature type="active site" description="4-aspartylphosphate intermediate" evidence="1">
    <location>
        <position position="353"/>
    </location>
</feature>
<accession>O43108</accession>
<protein>
    <recommendedName>
        <fullName>Calcium-transporting ATPase 1</fullName>
        <ecNumber>7.2.2.10</ecNumber>
    </recommendedName>
    <alternativeName>
        <fullName>P-type calcium ATPase</fullName>
    </alternativeName>
</protein>
<gene>
    <name type="primary">PMR1</name>
    <name type="synonym">SCA1</name>
    <name type="ordered locus">YALI0E09471g</name>
</gene>
<evidence type="ECO:0000250" key="1"/>
<evidence type="ECO:0000255" key="2"/>
<evidence type="ECO:0000256" key="3">
    <source>
        <dbReference type="SAM" id="MobiDB-lite"/>
    </source>
</evidence>
<evidence type="ECO:0000305" key="4"/>
<keyword id="KW-0067">ATP-binding</keyword>
<keyword id="KW-0106">Calcium</keyword>
<keyword id="KW-0109">Calcium transport</keyword>
<keyword id="KW-0333">Golgi apparatus</keyword>
<keyword id="KW-0406">Ion transport</keyword>
<keyword id="KW-0460">Magnesium</keyword>
<keyword id="KW-0472">Membrane</keyword>
<keyword id="KW-0547">Nucleotide-binding</keyword>
<keyword id="KW-0597">Phosphoprotein</keyword>
<keyword id="KW-1185">Reference proteome</keyword>
<keyword id="KW-1278">Translocase</keyword>
<keyword id="KW-0812">Transmembrane</keyword>
<keyword id="KW-1133">Transmembrane helix</keyword>
<keyword id="KW-0813">Transport</keyword>
<sequence>MDSHTSTEGVPLSETNNRSHATPSAQYCQMTVEETCSKLQTNPETGLTSSQEAMHRRDIHGSNEFAQEEEDSLIKKFFEQFSENPLLLLLIGAAAVSFFMGNHDDAISITLAILIVTTVGFVQEYRSEKSLEALNKLVPPEAHLIRAGNSQTVLASTLVPGDLVEFSVGDRIPADCRIVKAVHLSIDESNLTGETTPVTKDTNPVTGTPPIGLADRTNTAYMGTLVRDGNGTGIVVGTGSHTAFGAVYDMVSEISTPKTPLQASMDNLGKDLSLVSFGVIGVICLIGMFQGRDWLEMFTIGVSLAVAAIPEGLPIIVTVTLALGVLRMSRQKAIVRKLPSVETLGSVNVICSDKTGTLTRNHMSCTTCWTVDMGDLANAVTLKPGQSHTEADPKAVAALKNSVSLANMLKVGNLCNNSKFNREAGHLVGNATDIALIEVLDYFGLEDTRETRKRVAEVPFSSSRKWMLTSTTTGDSSTPMISVKGAGEVIAPFCEYYCKKDGKTAPFNDDMRKKVTEIASEMSNDGLRIIAFAYKQGKYEEGSEEAPEGLVFAGLMGLYDPPRPDVPRAIRRLTTGGVRVVMITGDSAATALSIGRRIGMPLMPGTQSVVEGSKLATMSDQALDECLQTASIFARTSPEDKMKIVKGFQRRGDVVAMTGDGVNDAPALKLADIGIAMGQGGTDVAKEAADMILTDDDFATILSAIEEGKGIFNNIRNFITFQLSTSMAALSIVAVATIMGLENPLNPMQILWINILMDGPPAQSLGVEPVDPDVMNKPPRPRNEKVMTPDLVKKCVEAAVIILVGTMLVYVTQMQDGVIDKRDTTMTFTCFVFYDMFNALACRSATKSVFEIGFFSNKMFLYACGASIIGQLAVVYVPFLQSVFQTEALSVKDLLSLVLISSSVWILDEAKKYFLKSRSTNNYTNSVV</sequence>
<proteinExistence type="inferred from homology"/>
<name>ATC1_YARLI</name>
<reference key="1">
    <citation type="journal article" date="1998" name="Gene">
        <title>Molecular cloning of YlPMR1, a S. cerevisiae PMR1 homologue encoding a novel P-type secretory pathway Ca2+ ATPase, in the yeast Yarrowia lipolytica.</title>
        <authorList>
            <person name="Park C.S."/>
            <person name="Kim J.-Y."/>
            <person name="Crispino C."/>
            <person name="Chang C.C."/>
            <person name="Ryu D.D.Y."/>
        </authorList>
    </citation>
    <scope>NUCLEOTIDE SEQUENCE [GENOMIC DNA]</scope>
</reference>
<reference key="2">
    <citation type="journal article" date="2004" name="Nature">
        <title>Genome evolution in yeasts.</title>
        <authorList>
            <person name="Dujon B."/>
            <person name="Sherman D."/>
            <person name="Fischer G."/>
            <person name="Durrens P."/>
            <person name="Casaregola S."/>
            <person name="Lafontaine I."/>
            <person name="de Montigny J."/>
            <person name="Marck C."/>
            <person name="Neuveglise C."/>
            <person name="Talla E."/>
            <person name="Goffard N."/>
            <person name="Frangeul L."/>
            <person name="Aigle M."/>
            <person name="Anthouard V."/>
            <person name="Babour A."/>
            <person name="Barbe V."/>
            <person name="Barnay S."/>
            <person name="Blanchin S."/>
            <person name="Beckerich J.-M."/>
            <person name="Beyne E."/>
            <person name="Bleykasten C."/>
            <person name="Boisrame A."/>
            <person name="Boyer J."/>
            <person name="Cattolico L."/>
            <person name="Confanioleri F."/>
            <person name="de Daruvar A."/>
            <person name="Despons L."/>
            <person name="Fabre E."/>
            <person name="Fairhead C."/>
            <person name="Ferry-Dumazet H."/>
            <person name="Groppi A."/>
            <person name="Hantraye F."/>
            <person name="Hennequin C."/>
            <person name="Jauniaux N."/>
            <person name="Joyet P."/>
            <person name="Kachouri R."/>
            <person name="Kerrest A."/>
            <person name="Koszul R."/>
            <person name="Lemaire M."/>
            <person name="Lesur I."/>
            <person name="Ma L."/>
            <person name="Muller H."/>
            <person name="Nicaud J.-M."/>
            <person name="Nikolski M."/>
            <person name="Oztas S."/>
            <person name="Ozier-Kalogeropoulos O."/>
            <person name="Pellenz S."/>
            <person name="Potier S."/>
            <person name="Richard G.-F."/>
            <person name="Straub M.-L."/>
            <person name="Suleau A."/>
            <person name="Swennen D."/>
            <person name="Tekaia F."/>
            <person name="Wesolowski-Louvel M."/>
            <person name="Westhof E."/>
            <person name="Wirth B."/>
            <person name="Zeniou-Meyer M."/>
            <person name="Zivanovic Y."/>
            <person name="Bolotin-Fukuhara M."/>
            <person name="Thierry A."/>
            <person name="Bouchier C."/>
            <person name="Caudron B."/>
            <person name="Scarpelli C."/>
            <person name="Gaillardin C."/>
            <person name="Weissenbach J."/>
            <person name="Wincker P."/>
            <person name="Souciet J.-L."/>
        </authorList>
    </citation>
    <scope>NUCLEOTIDE SEQUENCE [LARGE SCALE GENOMIC DNA]</scope>
    <source>
        <strain>CLIB 122 / E 150</strain>
    </source>
</reference>
<comment type="function">
    <text>This magnesium-dependent enzyme catalyzes the hydrolysis of ATP coupled with the transport of calcium. Has a role in the secretory pathway.</text>
</comment>
<comment type="catalytic activity">
    <reaction>
        <text>Ca(2+)(in) + ATP + H2O = Ca(2+)(out) + ADP + phosphate + H(+)</text>
        <dbReference type="Rhea" id="RHEA:18105"/>
        <dbReference type="ChEBI" id="CHEBI:15377"/>
        <dbReference type="ChEBI" id="CHEBI:15378"/>
        <dbReference type="ChEBI" id="CHEBI:29108"/>
        <dbReference type="ChEBI" id="CHEBI:30616"/>
        <dbReference type="ChEBI" id="CHEBI:43474"/>
        <dbReference type="ChEBI" id="CHEBI:456216"/>
        <dbReference type="EC" id="7.2.2.10"/>
    </reaction>
</comment>
<comment type="subcellular location">
    <subcellularLocation>
        <location>Golgi apparatus membrane</location>
        <topology>Multi-pass membrane protein</topology>
    </subcellularLocation>
</comment>
<comment type="similarity">
    <text evidence="4">Belongs to the cation transport ATPase (P-type) (TC 3.A.3) family.</text>
</comment>